<comment type="function">
    <text evidence="1">Catalyzes the initial step of the lipid cycle reactions in the biosynthesis of the cell wall peptidoglycan: transfers peptidoglycan precursor phospho-MurNAc-pentapeptide from UDP-MurNAc-pentapeptide onto the lipid carrier undecaprenyl phosphate, yielding undecaprenyl-pyrophosphoryl-MurNAc-pentapeptide, known as lipid I.</text>
</comment>
<comment type="catalytic activity">
    <reaction evidence="1">
        <text>UDP-N-acetyl-alpha-D-muramoyl-L-alanyl-gamma-D-glutamyl-meso-2,6-diaminopimeloyl-D-alanyl-D-alanine + di-trans,octa-cis-undecaprenyl phosphate = di-trans,octa-cis-undecaprenyl diphospho-N-acetyl-alpha-D-muramoyl-L-alanyl-D-glutamyl-meso-2,6-diaminopimeloyl-D-alanyl-D-alanine + UMP</text>
        <dbReference type="Rhea" id="RHEA:28386"/>
        <dbReference type="ChEBI" id="CHEBI:57865"/>
        <dbReference type="ChEBI" id="CHEBI:60392"/>
        <dbReference type="ChEBI" id="CHEBI:61386"/>
        <dbReference type="ChEBI" id="CHEBI:61387"/>
        <dbReference type="EC" id="2.7.8.13"/>
    </reaction>
</comment>
<comment type="cofactor">
    <cofactor evidence="1">
        <name>Mg(2+)</name>
        <dbReference type="ChEBI" id="CHEBI:18420"/>
    </cofactor>
</comment>
<comment type="pathway">
    <text evidence="1">Cell wall biogenesis; peptidoglycan biosynthesis.</text>
</comment>
<comment type="subcellular location">
    <subcellularLocation>
        <location evidence="1">Cell membrane</location>
        <topology evidence="1">Multi-pass membrane protein</topology>
    </subcellularLocation>
</comment>
<comment type="similarity">
    <text evidence="1">Belongs to the glycosyltransferase 4 family. MraY subfamily.</text>
</comment>
<evidence type="ECO:0000255" key="1">
    <source>
        <dbReference type="HAMAP-Rule" id="MF_00038"/>
    </source>
</evidence>
<sequence>MLEQVILFTIIMGFLISVLLSPIFIPFLRRLKFGQSIREEGPQSHQKKSGTPTMGGIMIIFSITITTIVMINKFSEISPEMFLLLFVTLGYGLLGFLDDYIKVAMKRNLGLTSKQKLIGQIVIAVIFYAVFHYYQFATTIRIPGTDVSFDLGWAYFILVVFMLVGGSNAVNLTDGLDGLLSGTAAIAFGAFAILAWNQSQYDVAIFSVAVAGAVLGFLVFNAHPAKVFMGDTGSLALGGAIVAIAILTKLEILLVIIGGVFVVETLSVILQVISFKTTGKRIFKMSPLHHHYELVGWSEWRVVVTFWTAGLLLAVLGIYIEVWL</sequence>
<feature type="chain" id="PRO_1000057274" description="Phospho-N-acetylmuramoyl-pentapeptide-transferase">
    <location>
        <begin position="1"/>
        <end position="324"/>
    </location>
</feature>
<feature type="transmembrane region" description="Helical" evidence="1">
    <location>
        <begin position="5"/>
        <end position="25"/>
    </location>
</feature>
<feature type="transmembrane region" description="Helical" evidence="1">
    <location>
        <begin position="51"/>
        <end position="71"/>
    </location>
</feature>
<feature type="transmembrane region" description="Helical" evidence="1">
    <location>
        <begin position="77"/>
        <end position="97"/>
    </location>
</feature>
<feature type="transmembrane region" description="Helical" evidence="1">
    <location>
        <begin position="117"/>
        <end position="137"/>
    </location>
</feature>
<feature type="transmembrane region" description="Helical" evidence="1">
    <location>
        <begin position="147"/>
        <end position="167"/>
    </location>
</feature>
<feature type="transmembrane region" description="Helical" evidence="1">
    <location>
        <begin position="176"/>
        <end position="196"/>
    </location>
</feature>
<feature type="transmembrane region" description="Helical" evidence="1">
    <location>
        <begin position="203"/>
        <end position="223"/>
    </location>
</feature>
<feature type="transmembrane region" description="Helical" evidence="1">
    <location>
        <begin position="227"/>
        <end position="248"/>
    </location>
</feature>
<feature type="transmembrane region" description="Helical" evidence="1">
    <location>
        <begin position="302"/>
        <end position="322"/>
    </location>
</feature>
<reference key="1">
    <citation type="journal article" date="2007" name="PLoS ONE">
        <title>Paradoxical DNA repair and peroxide resistance gene conservation in Bacillus pumilus SAFR-032.</title>
        <authorList>
            <person name="Gioia J."/>
            <person name="Yerrapragada S."/>
            <person name="Qin X."/>
            <person name="Jiang H."/>
            <person name="Igboeli O.C."/>
            <person name="Muzny D."/>
            <person name="Dugan-Rocha S."/>
            <person name="Ding Y."/>
            <person name="Hawes A."/>
            <person name="Liu W."/>
            <person name="Perez L."/>
            <person name="Kovar C."/>
            <person name="Dinh H."/>
            <person name="Lee S."/>
            <person name="Nazareth L."/>
            <person name="Blyth P."/>
            <person name="Holder M."/>
            <person name="Buhay C."/>
            <person name="Tirumalai M.R."/>
            <person name="Liu Y."/>
            <person name="Dasgupta I."/>
            <person name="Bokhetache L."/>
            <person name="Fujita M."/>
            <person name="Karouia F."/>
            <person name="Eswara Moorthy P."/>
            <person name="Siefert J."/>
            <person name="Uzman A."/>
            <person name="Buzumbo P."/>
            <person name="Verma A."/>
            <person name="Zwiya H."/>
            <person name="McWilliams B.D."/>
            <person name="Olowu A."/>
            <person name="Clinkenbeard K.D."/>
            <person name="Newcombe D."/>
            <person name="Golebiewski L."/>
            <person name="Petrosino J.F."/>
            <person name="Nicholson W.L."/>
            <person name="Fox G.E."/>
            <person name="Venkateswaran K."/>
            <person name="Highlander S.K."/>
            <person name="Weinstock G.M."/>
        </authorList>
    </citation>
    <scope>NUCLEOTIDE SEQUENCE [LARGE SCALE GENOMIC DNA]</scope>
    <source>
        <strain>SAFR-032</strain>
    </source>
</reference>
<protein>
    <recommendedName>
        <fullName evidence="1">Phospho-N-acetylmuramoyl-pentapeptide-transferase</fullName>
        <ecNumber evidence="1">2.7.8.13</ecNumber>
    </recommendedName>
    <alternativeName>
        <fullName evidence="1">UDP-MurNAc-pentapeptide phosphotransferase</fullName>
    </alternativeName>
</protein>
<keyword id="KW-0131">Cell cycle</keyword>
<keyword id="KW-0132">Cell division</keyword>
<keyword id="KW-1003">Cell membrane</keyword>
<keyword id="KW-0133">Cell shape</keyword>
<keyword id="KW-0961">Cell wall biogenesis/degradation</keyword>
<keyword id="KW-0460">Magnesium</keyword>
<keyword id="KW-0472">Membrane</keyword>
<keyword id="KW-0479">Metal-binding</keyword>
<keyword id="KW-0573">Peptidoglycan synthesis</keyword>
<keyword id="KW-0808">Transferase</keyword>
<keyword id="KW-0812">Transmembrane</keyword>
<keyword id="KW-1133">Transmembrane helix</keyword>
<organism>
    <name type="scientific">Bacillus pumilus (strain SAFR-032)</name>
    <dbReference type="NCBI Taxonomy" id="315750"/>
    <lineage>
        <taxon>Bacteria</taxon>
        <taxon>Bacillati</taxon>
        <taxon>Bacillota</taxon>
        <taxon>Bacilli</taxon>
        <taxon>Bacillales</taxon>
        <taxon>Bacillaceae</taxon>
        <taxon>Bacillus</taxon>
    </lineage>
</organism>
<name>MRAY_BACP2</name>
<proteinExistence type="inferred from homology"/>
<accession>A8FCX8</accession>
<gene>
    <name evidence="1" type="primary">mraY</name>
    <name type="ordered locus">BPUM_1412</name>
</gene>
<dbReference type="EC" id="2.7.8.13" evidence="1"/>
<dbReference type="EMBL" id="CP000813">
    <property type="protein sequence ID" value="ABV62095.1"/>
    <property type="molecule type" value="Genomic_DNA"/>
</dbReference>
<dbReference type="RefSeq" id="WP_003211854.1">
    <property type="nucleotide sequence ID" value="NZ_VEIS01000003.1"/>
</dbReference>
<dbReference type="SMR" id="A8FCX8"/>
<dbReference type="STRING" id="315750.BPUM_1412"/>
<dbReference type="GeneID" id="61766855"/>
<dbReference type="KEGG" id="bpu:BPUM_1412"/>
<dbReference type="eggNOG" id="COG0472">
    <property type="taxonomic scope" value="Bacteria"/>
</dbReference>
<dbReference type="HOGENOM" id="CLU_023982_0_1_9"/>
<dbReference type="OrthoDB" id="9805475at2"/>
<dbReference type="UniPathway" id="UPA00219"/>
<dbReference type="Proteomes" id="UP000001355">
    <property type="component" value="Chromosome"/>
</dbReference>
<dbReference type="GO" id="GO:0005886">
    <property type="term" value="C:plasma membrane"/>
    <property type="evidence" value="ECO:0007669"/>
    <property type="project" value="UniProtKB-SubCell"/>
</dbReference>
<dbReference type="GO" id="GO:0046872">
    <property type="term" value="F:metal ion binding"/>
    <property type="evidence" value="ECO:0007669"/>
    <property type="project" value="UniProtKB-KW"/>
</dbReference>
<dbReference type="GO" id="GO:0008963">
    <property type="term" value="F:phospho-N-acetylmuramoyl-pentapeptide-transferase activity"/>
    <property type="evidence" value="ECO:0007669"/>
    <property type="project" value="UniProtKB-UniRule"/>
</dbReference>
<dbReference type="GO" id="GO:0051992">
    <property type="term" value="F:UDP-N-acetylmuramoyl-L-alanyl-D-glutamyl-meso-2,6-diaminopimelyl-D-alanyl-D-alanine:undecaprenyl-phosphate transferase activity"/>
    <property type="evidence" value="ECO:0007669"/>
    <property type="project" value="RHEA"/>
</dbReference>
<dbReference type="GO" id="GO:0051301">
    <property type="term" value="P:cell division"/>
    <property type="evidence" value="ECO:0007669"/>
    <property type="project" value="UniProtKB-KW"/>
</dbReference>
<dbReference type="GO" id="GO:0071555">
    <property type="term" value="P:cell wall organization"/>
    <property type="evidence" value="ECO:0007669"/>
    <property type="project" value="UniProtKB-KW"/>
</dbReference>
<dbReference type="GO" id="GO:0009252">
    <property type="term" value="P:peptidoglycan biosynthetic process"/>
    <property type="evidence" value="ECO:0007669"/>
    <property type="project" value="UniProtKB-UniRule"/>
</dbReference>
<dbReference type="GO" id="GO:0008360">
    <property type="term" value="P:regulation of cell shape"/>
    <property type="evidence" value="ECO:0007669"/>
    <property type="project" value="UniProtKB-KW"/>
</dbReference>
<dbReference type="CDD" id="cd06852">
    <property type="entry name" value="GT_MraY"/>
    <property type="match status" value="1"/>
</dbReference>
<dbReference type="HAMAP" id="MF_00038">
    <property type="entry name" value="MraY"/>
    <property type="match status" value="1"/>
</dbReference>
<dbReference type="InterPro" id="IPR000715">
    <property type="entry name" value="Glycosyl_transferase_4"/>
</dbReference>
<dbReference type="InterPro" id="IPR003524">
    <property type="entry name" value="PNAcMuramoyl-5peptid_Trfase"/>
</dbReference>
<dbReference type="InterPro" id="IPR018480">
    <property type="entry name" value="PNAcMuramoyl-5peptid_Trfase_CS"/>
</dbReference>
<dbReference type="NCBIfam" id="TIGR00445">
    <property type="entry name" value="mraY"/>
    <property type="match status" value="1"/>
</dbReference>
<dbReference type="PANTHER" id="PTHR22926">
    <property type="entry name" value="PHOSPHO-N-ACETYLMURAMOYL-PENTAPEPTIDE-TRANSFERASE"/>
    <property type="match status" value="1"/>
</dbReference>
<dbReference type="PANTHER" id="PTHR22926:SF5">
    <property type="entry name" value="PHOSPHO-N-ACETYLMURAMOYL-PENTAPEPTIDE-TRANSFERASE HOMOLOG"/>
    <property type="match status" value="1"/>
</dbReference>
<dbReference type="Pfam" id="PF00953">
    <property type="entry name" value="Glycos_transf_4"/>
    <property type="match status" value="1"/>
</dbReference>
<dbReference type="Pfam" id="PF10555">
    <property type="entry name" value="MraY_sig1"/>
    <property type="match status" value="1"/>
</dbReference>
<dbReference type="PROSITE" id="PS01347">
    <property type="entry name" value="MRAY_1"/>
    <property type="match status" value="1"/>
</dbReference>
<dbReference type="PROSITE" id="PS01348">
    <property type="entry name" value="MRAY_2"/>
    <property type="match status" value="1"/>
</dbReference>